<feature type="chain" id="PRO_1000001382" description="Holliday junction branch migration complex subunit RuvB">
    <location>
        <begin position="1"/>
        <end position="340"/>
    </location>
</feature>
<feature type="region of interest" description="Large ATPase domain (RuvB-L)" evidence="1">
    <location>
        <begin position="1"/>
        <end position="181"/>
    </location>
</feature>
<feature type="region of interest" description="Small ATPAse domain (RuvB-S)" evidence="1">
    <location>
        <begin position="182"/>
        <end position="252"/>
    </location>
</feature>
<feature type="region of interest" description="Head domain (RuvB-H)" evidence="1">
    <location>
        <begin position="255"/>
        <end position="340"/>
    </location>
</feature>
<feature type="binding site" evidence="1">
    <location>
        <position position="20"/>
    </location>
    <ligand>
        <name>ATP</name>
        <dbReference type="ChEBI" id="CHEBI:30616"/>
    </ligand>
</feature>
<feature type="binding site" evidence="1">
    <location>
        <position position="21"/>
    </location>
    <ligand>
        <name>ATP</name>
        <dbReference type="ChEBI" id="CHEBI:30616"/>
    </ligand>
</feature>
<feature type="binding site" evidence="1">
    <location>
        <position position="62"/>
    </location>
    <ligand>
        <name>ATP</name>
        <dbReference type="ChEBI" id="CHEBI:30616"/>
    </ligand>
</feature>
<feature type="binding site" evidence="1">
    <location>
        <position position="65"/>
    </location>
    <ligand>
        <name>ATP</name>
        <dbReference type="ChEBI" id="CHEBI:30616"/>
    </ligand>
</feature>
<feature type="binding site" evidence="1">
    <location>
        <position position="66"/>
    </location>
    <ligand>
        <name>ATP</name>
        <dbReference type="ChEBI" id="CHEBI:30616"/>
    </ligand>
</feature>
<feature type="binding site" evidence="1">
    <location>
        <position position="66"/>
    </location>
    <ligand>
        <name>Mg(2+)</name>
        <dbReference type="ChEBI" id="CHEBI:18420"/>
    </ligand>
</feature>
<feature type="binding site" evidence="1">
    <location>
        <position position="67"/>
    </location>
    <ligand>
        <name>ATP</name>
        <dbReference type="ChEBI" id="CHEBI:30616"/>
    </ligand>
</feature>
<feature type="binding site" evidence="1">
    <location>
        <begin position="128"/>
        <end position="130"/>
    </location>
    <ligand>
        <name>ATP</name>
        <dbReference type="ChEBI" id="CHEBI:30616"/>
    </ligand>
</feature>
<feature type="binding site" evidence="1">
    <location>
        <position position="171"/>
    </location>
    <ligand>
        <name>ATP</name>
        <dbReference type="ChEBI" id="CHEBI:30616"/>
    </ligand>
</feature>
<feature type="binding site" evidence="1">
    <location>
        <position position="181"/>
    </location>
    <ligand>
        <name>ATP</name>
        <dbReference type="ChEBI" id="CHEBI:30616"/>
    </ligand>
</feature>
<feature type="binding site" evidence="1">
    <location>
        <position position="218"/>
    </location>
    <ligand>
        <name>ATP</name>
        <dbReference type="ChEBI" id="CHEBI:30616"/>
    </ligand>
</feature>
<feature type="binding site" evidence="1">
    <location>
        <position position="309"/>
    </location>
    <ligand>
        <name>DNA</name>
        <dbReference type="ChEBI" id="CHEBI:16991"/>
    </ligand>
</feature>
<feature type="binding site" evidence="1">
    <location>
        <position position="314"/>
    </location>
    <ligand>
        <name>DNA</name>
        <dbReference type="ChEBI" id="CHEBI:16991"/>
    </ligand>
</feature>
<sequence length="340" mass="37749">MDRIVEIEKADFEEEIETSLRPTSFDDYIGQSKIKENLKVFIAAAKKRAECLDHVLFYGPPGLGKTTLAHIIANEMGVSIKITAAPMIEKSGDLAAILTNLEENDVLFIDEIHRLSSAIEEVLYSAMEDFRLDIIIGSGPAAQTIKIDIPKFTLIGATTRAGMISAPLRDRFGMQFRLNFYTSDELAKIVQIAAVKLNKECEKNAALQIAKRSRGTPRIALRLLKRIRDFAEVNNENIINENRAKSSLDALGVNDLGFDEMDLKYLEILGSTKNRALGLSTISAALSEDEGTIEDVIEPYLLANGYIERTAKGRIITAKSCEILGIKYKMTQKGLFDEDQ</sequence>
<dbReference type="EC" id="3.6.4.-" evidence="1"/>
<dbReference type="EMBL" id="CP000776">
    <property type="protein sequence ID" value="ABS51630.1"/>
    <property type="molecule type" value="Genomic_DNA"/>
</dbReference>
<dbReference type="RefSeq" id="WP_012108604.1">
    <property type="nucleotide sequence ID" value="NC_009714.1"/>
</dbReference>
<dbReference type="SMR" id="A7I1C5"/>
<dbReference type="STRING" id="360107.CHAB381_0737"/>
<dbReference type="KEGG" id="cha:CHAB381_0737"/>
<dbReference type="eggNOG" id="COG2255">
    <property type="taxonomic scope" value="Bacteria"/>
</dbReference>
<dbReference type="HOGENOM" id="CLU_055599_1_0_7"/>
<dbReference type="OrthoDB" id="9804478at2"/>
<dbReference type="Proteomes" id="UP000002407">
    <property type="component" value="Chromosome"/>
</dbReference>
<dbReference type="GO" id="GO:0005737">
    <property type="term" value="C:cytoplasm"/>
    <property type="evidence" value="ECO:0007669"/>
    <property type="project" value="UniProtKB-SubCell"/>
</dbReference>
<dbReference type="GO" id="GO:0048476">
    <property type="term" value="C:Holliday junction resolvase complex"/>
    <property type="evidence" value="ECO:0007669"/>
    <property type="project" value="UniProtKB-UniRule"/>
</dbReference>
<dbReference type="GO" id="GO:0005524">
    <property type="term" value="F:ATP binding"/>
    <property type="evidence" value="ECO:0007669"/>
    <property type="project" value="UniProtKB-UniRule"/>
</dbReference>
<dbReference type="GO" id="GO:0016887">
    <property type="term" value="F:ATP hydrolysis activity"/>
    <property type="evidence" value="ECO:0007669"/>
    <property type="project" value="InterPro"/>
</dbReference>
<dbReference type="GO" id="GO:0000400">
    <property type="term" value="F:four-way junction DNA binding"/>
    <property type="evidence" value="ECO:0007669"/>
    <property type="project" value="UniProtKB-UniRule"/>
</dbReference>
<dbReference type="GO" id="GO:0009378">
    <property type="term" value="F:four-way junction helicase activity"/>
    <property type="evidence" value="ECO:0007669"/>
    <property type="project" value="InterPro"/>
</dbReference>
<dbReference type="GO" id="GO:0006310">
    <property type="term" value="P:DNA recombination"/>
    <property type="evidence" value="ECO:0007669"/>
    <property type="project" value="UniProtKB-UniRule"/>
</dbReference>
<dbReference type="GO" id="GO:0006281">
    <property type="term" value="P:DNA repair"/>
    <property type="evidence" value="ECO:0007669"/>
    <property type="project" value="UniProtKB-UniRule"/>
</dbReference>
<dbReference type="CDD" id="cd00009">
    <property type="entry name" value="AAA"/>
    <property type="match status" value="1"/>
</dbReference>
<dbReference type="Gene3D" id="1.10.8.60">
    <property type="match status" value="1"/>
</dbReference>
<dbReference type="Gene3D" id="3.40.50.300">
    <property type="entry name" value="P-loop containing nucleotide triphosphate hydrolases"/>
    <property type="match status" value="1"/>
</dbReference>
<dbReference type="Gene3D" id="1.10.10.10">
    <property type="entry name" value="Winged helix-like DNA-binding domain superfamily/Winged helix DNA-binding domain"/>
    <property type="match status" value="1"/>
</dbReference>
<dbReference type="HAMAP" id="MF_00016">
    <property type="entry name" value="DNA_HJ_migration_RuvB"/>
    <property type="match status" value="1"/>
</dbReference>
<dbReference type="InterPro" id="IPR003593">
    <property type="entry name" value="AAA+_ATPase"/>
</dbReference>
<dbReference type="InterPro" id="IPR041445">
    <property type="entry name" value="AAA_lid_4"/>
</dbReference>
<dbReference type="InterPro" id="IPR004605">
    <property type="entry name" value="DNA_helicase_Holl-junc_RuvB"/>
</dbReference>
<dbReference type="InterPro" id="IPR027417">
    <property type="entry name" value="P-loop_NTPase"/>
</dbReference>
<dbReference type="InterPro" id="IPR008824">
    <property type="entry name" value="RuvB-like_N"/>
</dbReference>
<dbReference type="InterPro" id="IPR008823">
    <property type="entry name" value="RuvB_C"/>
</dbReference>
<dbReference type="InterPro" id="IPR036388">
    <property type="entry name" value="WH-like_DNA-bd_sf"/>
</dbReference>
<dbReference type="InterPro" id="IPR036390">
    <property type="entry name" value="WH_DNA-bd_sf"/>
</dbReference>
<dbReference type="NCBIfam" id="NF000868">
    <property type="entry name" value="PRK00080.1"/>
    <property type="match status" value="1"/>
</dbReference>
<dbReference type="NCBIfam" id="TIGR00635">
    <property type="entry name" value="ruvB"/>
    <property type="match status" value="1"/>
</dbReference>
<dbReference type="PANTHER" id="PTHR42848">
    <property type="match status" value="1"/>
</dbReference>
<dbReference type="PANTHER" id="PTHR42848:SF1">
    <property type="entry name" value="HOLLIDAY JUNCTION BRANCH MIGRATION COMPLEX SUBUNIT RUVB"/>
    <property type="match status" value="1"/>
</dbReference>
<dbReference type="Pfam" id="PF17864">
    <property type="entry name" value="AAA_lid_4"/>
    <property type="match status" value="1"/>
</dbReference>
<dbReference type="Pfam" id="PF05491">
    <property type="entry name" value="RuvB_C"/>
    <property type="match status" value="1"/>
</dbReference>
<dbReference type="Pfam" id="PF05496">
    <property type="entry name" value="RuvB_N"/>
    <property type="match status" value="1"/>
</dbReference>
<dbReference type="SMART" id="SM00382">
    <property type="entry name" value="AAA"/>
    <property type="match status" value="1"/>
</dbReference>
<dbReference type="SUPFAM" id="SSF52540">
    <property type="entry name" value="P-loop containing nucleoside triphosphate hydrolases"/>
    <property type="match status" value="1"/>
</dbReference>
<dbReference type="SUPFAM" id="SSF46785">
    <property type="entry name" value="Winged helix' DNA-binding domain"/>
    <property type="match status" value="1"/>
</dbReference>
<evidence type="ECO:0000255" key="1">
    <source>
        <dbReference type="HAMAP-Rule" id="MF_00016"/>
    </source>
</evidence>
<proteinExistence type="inferred from homology"/>
<comment type="function">
    <text evidence="1">The RuvA-RuvB-RuvC complex processes Holliday junction (HJ) DNA during genetic recombination and DNA repair, while the RuvA-RuvB complex plays an important role in the rescue of blocked DNA replication forks via replication fork reversal (RFR). RuvA specifically binds to HJ cruciform DNA, conferring on it an open structure. The RuvB hexamer acts as an ATP-dependent pump, pulling dsDNA into and through the RuvAB complex. RuvB forms 2 homohexamers on either side of HJ DNA bound by 1 or 2 RuvA tetramers; 4 subunits per hexamer contact DNA at a time. Coordinated motions by a converter formed by DNA-disengaged RuvB subunits stimulates ATP hydrolysis and nucleotide exchange. Immobilization of the converter enables RuvB to convert the ATP-contained energy into a lever motion, pulling 2 nucleotides of DNA out of the RuvA tetramer per ATP hydrolyzed, thus driving DNA branch migration. The RuvB motors rotate together with the DNA substrate, which together with the progressing nucleotide cycle form the mechanistic basis for DNA recombination by continuous HJ branch migration. Branch migration allows RuvC to scan DNA until it finds its consensus sequence, where it cleaves and resolves cruciform DNA.</text>
</comment>
<comment type="catalytic activity">
    <reaction evidence="1">
        <text>ATP + H2O = ADP + phosphate + H(+)</text>
        <dbReference type="Rhea" id="RHEA:13065"/>
        <dbReference type="ChEBI" id="CHEBI:15377"/>
        <dbReference type="ChEBI" id="CHEBI:15378"/>
        <dbReference type="ChEBI" id="CHEBI:30616"/>
        <dbReference type="ChEBI" id="CHEBI:43474"/>
        <dbReference type="ChEBI" id="CHEBI:456216"/>
    </reaction>
</comment>
<comment type="subunit">
    <text evidence="1">Homohexamer. Forms an RuvA(8)-RuvB(12)-Holliday junction (HJ) complex. HJ DNA is sandwiched between 2 RuvA tetramers; dsDNA enters through RuvA and exits via RuvB. An RuvB hexamer assembles on each DNA strand where it exits the tetramer. Each RuvB hexamer is contacted by two RuvA subunits (via domain III) on 2 adjacent RuvB subunits; this complex drives branch migration. In the full resolvosome a probable DNA-RuvA(4)-RuvB(12)-RuvC(2) complex forms which resolves the HJ.</text>
</comment>
<comment type="subcellular location">
    <subcellularLocation>
        <location evidence="1">Cytoplasm</location>
    </subcellularLocation>
</comment>
<comment type="domain">
    <text evidence="1">Has 3 domains, the large (RuvB-L) and small ATPase (RuvB-S) domains and the C-terminal head (RuvB-H) domain. The head domain binds DNA, while the ATPase domains jointly bind ATP, ADP or are empty depending on the state of the subunit in the translocation cycle. During a single DNA translocation step the structure of each domain remains the same, but their relative positions change.</text>
</comment>
<comment type="similarity">
    <text evidence="1">Belongs to the RuvB family.</text>
</comment>
<name>RUVB_CAMHC</name>
<protein>
    <recommendedName>
        <fullName evidence="1">Holliday junction branch migration complex subunit RuvB</fullName>
        <ecNumber evidence="1">3.6.4.-</ecNumber>
    </recommendedName>
</protein>
<gene>
    <name evidence="1" type="primary">ruvB</name>
    <name type="ordered locus">CHAB381_0737</name>
</gene>
<reference key="1">
    <citation type="submission" date="2007-07" db="EMBL/GenBank/DDBJ databases">
        <title>Complete genome sequence of Campylobacter hominis ATCC BAA-381, a commensal isolated from the human gastrointestinal tract.</title>
        <authorList>
            <person name="Fouts D.E."/>
            <person name="Mongodin E.F."/>
            <person name="Puiu D."/>
            <person name="Sebastian Y."/>
            <person name="Miller W.G."/>
            <person name="Mandrell R.E."/>
            <person name="Nelson K.E."/>
        </authorList>
    </citation>
    <scope>NUCLEOTIDE SEQUENCE [LARGE SCALE GENOMIC DNA]</scope>
    <source>
        <strain>ATCC BAA-381 / DSM 21671 / CCUG 45161 / LMG 19568 / NCTC 13146 / CH001A</strain>
    </source>
</reference>
<keyword id="KW-0067">ATP-binding</keyword>
<keyword id="KW-0963">Cytoplasm</keyword>
<keyword id="KW-0227">DNA damage</keyword>
<keyword id="KW-0233">DNA recombination</keyword>
<keyword id="KW-0234">DNA repair</keyword>
<keyword id="KW-0238">DNA-binding</keyword>
<keyword id="KW-0378">Hydrolase</keyword>
<keyword id="KW-0547">Nucleotide-binding</keyword>
<keyword id="KW-1185">Reference proteome</keyword>
<accession>A7I1C5</accession>
<organism>
    <name type="scientific">Campylobacter hominis (strain ATCC BAA-381 / DSM 21671 / CCUG 45161 / LMG 19568 / NCTC 13146 / CH001A)</name>
    <dbReference type="NCBI Taxonomy" id="360107"/>
    <lineage>
        <taxon>Bacteria</taxon>
        <taxon>Pseudomonadati</taxon>
        <taxon>Campylobacterota</taxon>
        <taxon>Epsilonproteobacteria</taxon>
        <taxon>Campylobacterales</taxon>
        <taxon>Campylobacteraceae</taxon>
        <taxon>Campylobacter</taxon>
    </lineage>
</organism>